<name>CD69_HUMAN</name>
<protein>
    <recommendedName>
        <fullName>Early activation antigen CD69</fullName>
    </recommendedName>
    <alternativeName>
        <fullName>Activation inducer molecule</fullName>
        <shortName>AIM</shortName>
    </alternativeName>
    <alternativeName>
        <fullName>BL-AC/P26</fullName>
    </alternativeName>
    <alternativeName>
        <fullName>C-type lectin domain family 2 member C</fullName>
    </alternativeName>
    <alternativeName>
        <fullName>EA1</fullName>
    </alternativeName>
    <alternativeName>
        <fullName>Early T-cell activation antigen p60</fullName>
    </alternativeName>
    <alternativeName>
        <fullName>GP32/28</fullName>
    </alternativeName>
    <alternativeName>
        <fullName>Leukocyte surface antigen Leu-23</fullName>
    </alternativeName>
    <alternativeName>
        <fullName>MLR-3</fullName>
    </alternativeName>
    <cdAntigenName>CD69</cdAntigenName>
</protein>
<dbReference type="EMBL" id="L07555">
    <property type="protein sequence ID" value="AAB46359.1"/>
    <property type="molecule type" value="mRNA"/>
</dbReference>
<dbReference type="EMBL" id="Z22576">
    <property type="protein sequence ID" value="CAA80298.1"/>
    <property type="molecule type" value="mRNA"/>
</dbReference>
<dbReference type="EMBL" id="Z30426">
    <property type="protein sequence ID" value="CAA83017.1"/>
    <property type="molecule type" value="Genomic_DNA"/>
</dbReference>
<dbReference type="EMBL" id="Z30430">
    <property type="protein sequence ID" value="CAA83017.1"/>
    <property type="status" value="JOINED"/>
    <property type="molecule type" value="Genomic_DNA"/>
</dbReference>
<dbReference type="EMBL" id="Z30427">
    <property type="protein sequence ID" value="CAA83017.1"/>
    <property type="status" value="JOINED"/>
    <property type="molecule type" value="Genomic_DNA"/>
</dbReference>
<dbReference type="EMBL" id="Z30429">
    <property type="protein sequence ID" value="CAA83017.1"/>
    <property type="status" value="JOINED"/>
    <property type="molecule type" value="Genomic_DNA"/>
</dbReference>
<dbReference type="EMBL" id="Z30428">
    <property type="protein sequence ID" value="CAA83017.1"/>
    <property type="status" value="JOINED"/>
    <property type="molecule type" value="Genomic_DNA"/>
</dbReference>
<dbReference type="EMBL" id="BC007037">
    <property type="protein sequence ID" value="AAH07037.1"/>
    <property type="molecule type" value="mRNA"/>
</dbReference>
<dbReference type="CCDS" id="CCDS8604.1"/>
<dbReference type="PIR" id="JH0822">
    <property type="entry name" value="JH0822"/>
</dbReference>
<dbReference type="RefSeq" id="NP_001772.1">
    <property type="nucleotide sequence ID" value="NM_001781.2"/>
</dbReference>
<dbReference type="PDB" id="1E87">
    <property type="method" value="X-ray"/>
    <property type="resolution" value="1.50 A"/>
    <property type="chains" value="A=82-199"/>
</dbReference>
<dbReference type="PDB" id="1E8I">
    <property type="method" value="X-ray"/>
    <property type="resolution" value="1.95 A"/>
    <property type="chains" value="A/B=82-199"/>
</dbReference>
<dbReference type="PDB" id="1FM5">
    <property type="method" value="X-ray"/>
    <property type="resolution" value="2.27 A"/>
    <property type="chains" value="A=64-199"/>
</dbReference>
<dbReference type="PDB" id="3CCK">
    <property type="method" value="X-ray"/>
    <property type="resolution" value="1.80 A"/>
    <property type="chains" value="A/B=82-199"/>
</dbReference>
<dbReference type="PDB" id="3HUP">
    <property type="method" value="X-ray"/>
    <property type="resolution" value="1.37 A"/>
    <property type="chains" value="A/B=70-199"/>
</dbReference>
<dbReference type="PDB" id="8G94">
    <property type="method" value="EM"/>
    <property type="resolution" value="3.15 A"/>
    <property type="chains" value="F/G=3-199"/>
</dbReference>
<dbReference type="PDBsum" id="1E87"/>
<dbReference type="PDBsum" id="1E8I"/>
<dbReference type="PDBsum" id="1FM5"/>
<dbReference type="PDBsum" id="3CCK"/>
<dbReference type="PDBsum" id="3HUP"/>
<dbReference type="PDBsum" id="8G94"/>
<dbReference type="BMRB" id="Q07108"/>
<dbReference type="EMDB" id="EMD-29861"/>
<dbReference type="SMR" id="Q07108"/>
<dbReference type="BioGRID" id="107407">
    <property type="interactions" value="25"/>
</dbReference>
<dbReference type="CORUM" id="Q07108"/>
<dbReference type="DIP" id="DIP-60426N"/>
<dbReference type="ELM" id="Q07108"/>
<dbReference type="FunCoup" id="Q07108">
    <property type="interactions" value="133"/>
</dbReference>
<dbReference type="IntAct" id="Q07108">
    <property type="interactions" value="24"/>
</dbReference>
<dbReference type="STRING" id="9606.ENSP00000228434"/>
<dbReference type="BindingDB" id="Q07108"/>
<dbReference type="ChEMBL" id="CHEMBL3308911"/>
<dbReference type="TCDB" id="1.C.111.1.18">
    <property type="family name" value="the regiiiGama (regiiiGama) family"/>
</dbReference>
<dbReference type="UniLectin" id="Q07108"/>
<dbReference type="GlyConnect" id="2035">
    <property type="glycosylation" value="1 N-Linked glycan (1 site)"/>
</dbReference>
<dbReference type="GlyCosmos" id="Q07108">
    <property type="glycosylation" value="2 sites, 3 glycans"/>
</dbReference>
<dbReference type="GlyGen" id="Q07108">
    <property type="glycosylation" value="2 sites, 2 N-linked glycans (1 site), 1 O-linked glycan (1 site)"/>
</dbReference>
<dbReference type="iPTMnet" id="Q07108"/>
<dbReference type="PhosphoSitePlus" id="Q07108"/>
<dbReference type="SwissPalm" id="Q07108"/>
<dbReference type="BioMuta" id="CD69"/>
<dbReference type="DMDM" id="584906"/>
<dbReference type="jPOST" id="Q07108"/>
<dbReference type="MassIVE" id="Q07108"/>
<dbReference type="PaxDb" id="9606-ENSP00000228434"/>
<dbReference type="PeptideAtlas" id="Q07108"/>
<dbReference type="ProteomicsDB" id="58505"/>
<dbReference type="Antibodypedia" id="3741">
    <property type="antibodies" value="1278 antibodies from 46 providers"/>
</dbReference>
<dbReference type="DNASU" id="969"/>
<dbReference type="Ensembl" id="ENST00000228434.7">
    <property type="protein sequence ID" value="ENSP00000228434.3"/>
    <property type="gene ID" value="ENSG00000110848.8"/>
</dbReference>
<dbReference type="GeneID" id="969"/>
<dbReference type="KEGG" id="hsa:969"/>
<dbReference type="MANE-Select" id="ENST00000228434.7">
    <property type="protein sequence ID" value="ENSP00000228434.3"/>
    <property type="RefSeq nucleotide sequence ID" value="NM_001781.2"/>
    <property type="RefSeq protein sequence ID" value="NP_001772.1"/>
</dbReference>
<dbReference type="AGR" id="HGNC:1694"/>
<dbReference type="CTD" id="969"/>
<dbReference type="DisGeNET" id="969"/>
<dbReference type="GeneCards" id="CD69"/>
<dbReference type="HGNC" id="HGNC:1694">
    <property type="gene designation" value="CD69"/>
</dbReference>
<dbReference type="HPA" id="ENSG00000110848">
    <property type="expression patterns" value="Group enriched (bone marrow, lymphoid tissue)"/>
</dbReference>
<dbReference type="MIM" id="107273">
    <property type="type" value="gene"/>
</dbReference>
<dbReference type="neXtProt" id="NX_Q07108"/>
<dbReference type="OpenTargets" id="ENSG00000110848"/>
<dbReference type="PharmGKB" id="PA26233"/>
<dbReference type="VEuPathDB" id="HostDB:ENSG00000110848"/>
<dbReference type="eggNOG" id="KOG4297">
    <property type="taxonomic scope" value="Eukaryota"/>
</dbReference>
<dbReference type="GeneTree" id="ENSGT00940000161987"/>
<dbReference type="InParanoid" id="Q07108"/>
<dbReference type="OMA" id="WFNFTGS"/>
<dbReference type="OrthoDB" id="10059571at2759"/>
<dbReference type="PAN-GO" id="Q07108">
    <property type="GO annotations" value="1 GO annotation based on evolutionary models"/>
</dbReference>
<dbReference type="PhylomeDB" id="Q07108"/>
<dbReference type="TreeFam" id="TF351467"/>
<dbReference type="PathwayCommons" id="Q07108"/>
<dbReference type="SignaLink" id="Q07108"/>
<dbReference type="SIGNOR" id="Q07108"/>
<dbReference type="BioGRID-ORCS" id="969">
    <property type="hits" value="26 hits in 1166 CRISPR screens"/>
</dbReference>
<dbReference type="ChiTaRS" id="CD69">
    <property type="organism name" value="human"/>
</dbReference>
<dbReference type="EvolutionaryTrace" id="Q07108"/>
<dbReference type="GeneWiki" id="CD69"/>
<dbReference type="GenomeRNAi" id="969"/>
<dbReference type="Pharos" id="Q07108">
    <property type="development level" value="Tchem"/>
</dbReference>
<dbReference type="PRO" id="PR:Q07108"/>
<dbReference type="Proteomes" id="UP000005640">
    <property type="component" value="Chromosome 12"/>
</dbReference>
<dbReference type="RNAct" id="Q07108">
    <property type="molecule type" value="protein"/>
</dbReference>
<dbReference type="Bgee" id="ENSG00000110848">
    <property type="expression patterns" value="Expressed in lymph node and 135 other cell types or tissues"/>
</dbReference>
<dbReference type="ExpressionAtlas" id="Q07108">
    <property type="expression patterns" value="baseline and differential"/>
</dbReference>
<dbReference type="GO" id="GO:0009897">
    <property type="term" value="C:external side of plasma membrane"/>
    <property type="evidence" value="ECO:0007669"/>
    <property type="project" value="Ensembl"/>
</dbReference>
<dbReference type="GO" id="GO:0005886">
    <property type="term" value="C:plasma membrane"/>
    <property type="evidence" value="ECO:0000314"/>
    <property type="project" value="UniProt"/>
</dbReference>
<dbReference type="GO" id="GO:0032991">
    <property type="term" value="C:protein-containing complex"/>
    <property type="evidence" value="ECO:0000314"/>
    <property type="project" value="CAFA"/>
</dbReference>
<dbReference type="GO" id="GO:0030246">
    <property type="term" value="F:carbohydrate binding"/>
    <property type="evidence" value="ECO:0007669"/>
    <property type="project" value="UniProtKB-KW"/>
</dbReference>
<dbReference type="GO" id="GO:0042802">
    <property type="term" value="F:identical protein binding"/>
    <property type="evidence" value="ECO:0000314"/>
    <property type="project" value="CAFA"/>
</dbReference>
<dbReference type="GO" id="GO:0140313">
    <property type="term" value="F:molecular sequestering activity"/>
    <property type="evidence" value="ECO:0000314"/>
    <property type="project" value="UniProt"/>
</dbReference>
<dbReference type="GO" id="GO:0004888">
    <property type="term" value="F:transmembrane signaling receptor activity"/>
    <property type="evidence" value="ECO:0000314"/>
    <property type="project" value="UniProt"/>
</dbReference>
<dbReference type="GO" id="GO:0071466">
    <property type="term" value="P:cellular response to xenobiotic stimulus"/>
    <property type="evidence" value="ECO:0007669"/>
    <property type="project" value="Ensembl"/>
</dbReference>
<dbReference type="GO" id="GO:2000405">
    <property type="term" value="P:negative regulation of T cell migration"/>
    <property type="evidence" value="ECO:0000314"/>
    <property type="project" value="UniProt"/>
</dbReference>
<dbReference type="GO" id="GO:2000329">
    <property type="term" value="P:negative regulation of T-helper 17 cell lineage commitment"/>
    <property type="evidence" value="ECO:0000314"/>
    <property type="project" value="UniProt"/>
</dbReference>
<dbReference type="CDD" id="cd03593">
    <property type="entry name" value="CLECT_NK_receptors_like"/>
    <property type="match status" value="1"/>
</dbReference>
<dbReference type="FunFam" id="3.10.100.10:FF:000062">
    <property type="entry name" value="C-type lectin domain family 2 member D"/>
    <property type="match status" value="1"/>
</dbReference>
<dbReference type="Gene3D" id="3.10.100.10">
    <property type="entry name" value="Mannose-Binding Protein A, subunit A"/>
    <property type="match status" value="1"/>
</dbReference>
<dbReference type="InterPro" id="IPR001304">
    <property type="entry name" value="C-type_lectin-like"/>
</dbReference>
<dbReference type="InterPro" id="IPR016186">
    <property type="entry name" value="C-type_lectin-like/link_sf"/>
</dbReference>
<dbReference type="InterPro" id="IPR050828">
    <property type="entry name" value="C-type_lectin/matrix_domain"/>
</dbReference>
<dbReference type="InterPro" id="IPR016187">
    <property type="entry name" value="CTDL_fold"/>
</dbReference>
<dbReference type="InterPro" id="IPR033992">
    <property type="entry name" value="NKR-like_CTLD"/>
</dbReference>
<dbReference type="PANTHER" id="PTHR45710">
    <property type="entry name" value="C-TYPE LECTIN DOMAIN-CONTAINING PROTEIN 180"/>
    <property type="match status" value="1"/>
</dbReference>
<dbReference type="PANTHER" id="PTHR45710:SF31">
    <property type="entry name" value="EARLY ACTIVATION ANTIGEN CD69"/>
    <property type="match status" value="1"/>
</dbReference>
<dbReference type="Pfam" id="PF00059">
    <property type="entry name" value="Lectin_C"/>
    <property type="match status" value="1"/>
</dbReference>
<dbReference type="SMART" id="SM00034">
    <property type="entry name" value="CLECT"/>
    <property type="match status" value="1"/>
</dbReference>
<dbReference type="SUPFAM" id="SSF56436">
    <property type="entry name" value="C-type lectin-like"/>
    <property type="match status" value="1"/>
</dbReference>
<dbReference type="PROSITE" id="PS50041">
    <property type="entry name" value="C_TYPE_LECTIN_2"/>
    <property type="match status" value="1"/>
</dbReference>
<reference key="1">
    <citation type="journal article" date="1993" name="J. Immunol.">
        <title>Expression cloning of the early activation antigen CD69, a type II integral membrane protein with a C-type lectin domain.</title>
        <authorList>
            <person name="Hamann J."/>
            <person name="Fiebig H."/>
            <person name="Strauss M."/>
        </authorList>
    </citation>
    <scope>NUCLEOTIDE SEQUENCE [MRNA]</scope>
    <source>
        <tissue>Blood</tissue>
    </source>
</reference>
<reference key="2">
    <citation type="journal article" date="1993" name="J. Exp. Med.">
        <title>Molecular cloning, expression, and chromosomal localization of the human earliest lymphocyte activation antigen AIM/CD69, a new member of the C-type animal lectin superfamily of signal-transmitting receptors.</title>
        <authorList>
            <person name="Lopez-Cabrera M."/>
            <person name="Santis A.G."/>
            <person name="Fernandez-Ruiz E."/>
            <person name="Blacher R."/>
            <person name="Esch F."/>
            <person name="Sanchez-Mateos P."/>
            <person name="Sanchez-Madrid F."/>
        </authorList>
    </citation>
    <scope>NUCLEOTIDE SEQUENCE [MRNA]</scope>
    <scope>PROTEIN SEQUENCE OF 96-103; 128-146 AND 189-199</scope>
    <source>
        <tissue>Blood</tissue>
    </source>
</reference>
<reference key="3">
    <citation type="journal article" date="1993" name="Eur. J. Immunol.">
        <title>Molecular characterization of the early activation antigen CD69: a type II membrane glycoprotein related to a family of natural killer cell activation antigens.</title>
        <authorList>
            <person name="Ziegler S.F."/>
            <person name="Ramsdell F."/>
            <person name="Hjerrild K.A."/>
            <person name="Armitage R.J."/>
            <person name="Grabstein K.H."/>
            <person name="Hennen K.B."/>
            <person name="Farrah T."/>
            <person name="Fanslow W.C."/>
            <person name="Shevach E.M."/>
            <person name="Alderson M.R."/>
        </authorList>
    </citation>
    <scope>NUCLEOTIDE SEQUENCE [MRNA]</scope>
</reference>
<reference key="4">
    <citation type="journal article" date="1994" name="Eur. J. Immunol.">
        <title>Structure of the gene coding for the human early lymphocyte activation antigen CD69: a C-type lectin receptor evolutionarily related with the gene families of natural killer cell-specific receptors.</title>
        <authorList>
            <person name="Santis A."/>
            <person name="Lopez-Cabrera M."/>
            <person name="Hamann J."/>
            <person name="Strauss M."/>
            <person name="Sanchez-Madrid F."/>
        </authorList>
    </citation>
    <scope>NUCLEOTIDE SEQUENCE [GENOMIC DNA]</scope>
    <source>
        <tissue>Placenta</tissue>
    </source>
</reference>
<reference key="5">
    <citation type="journal article" date="2004" name="Genome Res.">
        <title>The status, quality, and expansion of the NIH full-length cDNA project: the Mammalian Gene Collection (MGC).</title>
        <authorList>
            <consortium name="The MGC Project Team"/>
        </authorList>
    </citation>
    <scope>NUCLEOTIDE SEQUENCE [LARGE SCALE MRNA]</scope>
    <source>
        <tissue>Pancreas</tissue>
    </source>
</reference>
<reference key="6">
    <citation type="journal article" date="2013" name="J. Proteome Res.">
        <title>Toward a comprehensive characterization of a human cancer cell phosphoproteome.</title>
        <authorList>
            <person name="Zhou H."/>
            <person name="Di Palma S."/>
            <person name="Preisinger C."/>
            <person name="Peng M."/>
            <person name="Polat A.N."/>
            <person name="Heck A.J."/>
            <person name="Mohammed S."/>
        </authorList>
    </citation>
    <scope>IDENTIFICATION BY MASS SPECTROMETRY [LARGE SCALE ANALYSIS]</scope>
    <source>
        <tissue>Erythroleukemia</tissue>
    </source>
</reference>
<reference key="7">
    <citation type="journal article" date="2014" name="Mol. Cell. Biol.">
        <title>The leukocyte activation receptor CD69 controls T cell differentiation through its interaction with galectin-1.</title>
        <authorList>
            <person name="de la Fuente H."/>
            <person name="Cruz-Adalia A."/>
            <person name="Martinez Del Hoyo G."/>
            <person name="Cibrian-Vera D."/>
            <person name="Bonay P."/>
            <person name="Perez-Hernandez D."/>
            <person name="Vazquez J."/>
            <person name="Navarro P."/>
            <person name="Gutierrez-Gallego R."/>
            <person name="Ramirez-Huesca M."/>
            <person name="Martin P."/>
            <person name="Sanchez-Madrid F."/>
        </authorList>
    </citation>
    <scope>FUNCTION</scope>
    <scope>INTERACTION WITH GALECTIN-1/LGALS1</scope>
</reference>
<reference key="8">
    <citation type="journal article" date="2015" name="FASEB J.">
        <title>Glycosylation-dependent interaction between CD69 and S100A8/S100A9 complex is required for regulatory T-cell differentiation.</title>
        <authorList>
            <person name="Lin C.R."/>
            <person name="Wei T.Y."/>
            <person name="Tsai H.Y."/>
            <person name="Wu Y.T."/>
            <person name="Wu P.Y."/>
            <person name="Chen S.T."/>
        </authorList>
    </citation>
    <scope>FUNCTION</scope>
    <scope>GLYCOSYLATION AT ASN-166</scope>
    <scope>INTERACTION WITH S100A8 AND S100A9</scope>
</reference>
<reference key="9">
    <citation type="journal article" date="2021" name="Clin. Transl. Med.">
        <title>CD69 mediates the protective role of adipose tissue-derived mesenchymal stem cells against Pseudomonas aeruginosa pulmonary infection.</title>
        <authorList>
            <person name="Jiang Y."/>
            <person name="Li F."/>
            <person name="Li Y."/>
            <person name="Duan J."/>
            <person name="Di C."/>
            <person name="Zhu Y."/>
            <person name="Zhao J."/>
            <person name="Jia X."/>
            <person name="Qu J."/>
        </authorList>
    </citation>
    <scope>FUNCTION</scope>
</reference>
<reference key="10">
    <citation type="journal article" date="2022" name="Cell. Mol. Life Sci.">
        <title>CD69-oxLDL ligand engagement induces Programmed Cell Death 1 (PD-1) expression in human CD4 + T lymphocytes.</title>
        <authorList>
            <person name="Jimenez-Fernandez M."/>
            <person name="Rodriguez-Sinovas C."/>
            <person name="Canes L."/>
            <person name="Ballester-Servera C."/>
            <person name="Vara A."/>
            <person name="Requena S."/>
            <person name="de la Fuente H."/>
            <person name="Martinez-Gonzalez J."/>
            <person name="Sanchez-Madrid F."/>
        </authorList>
    </citation>
    <scope>FUNCTION</scope>
</reference>
<reference key="11">
    <citation type="journal article" date="2000" name="Biochemistry">
        <title>Crystal structure of human CD69: a C-type lectin-like activation marker of hematopoietic cells.</title>
        <authorList>
            <person name="Natarajan K."/>
            <person name="Sawicki M.W."/>
            <person name="Margulies D.H."/>
            <person name="Mariuzza R.A."/>
        </authorList>
    </citation>
    <scope>X-RAY CRYSTALLOGRAPHY (2.27 ANGSTROMS)</scope>
    <scope>SUBUNIT</scope>
    <scope>DISULFIDE BONDS</scope>
</reference>
<reference key="12">
    <citation type="journal article" date="2001" name="J. Biol. Chem.">
        <title>Crystal structure of the C-type lectin-like domain from the human hematopoietic cell receptor CD69.</title>
        <authorList>
            <person name="Llera A.S."/>
            <person name="Viedma F."/>
            <person name="Sanchez-Madrid F."/>
            <person name="Tormo J."/>
        </authorList>
    </citation>
    <scope>X-RAY CRYSTALLOGRAPHY (1.5 ANGSTROMS) OF 82-199</scope>
    <scope>SUBUNIT</scope>
    <scope>DISULFIDE BONDS</scope>
</reference>
<reference key="13">
    <citation type="journal article" date="2008" name="FEBS J.">
        <title>Soluble recombinant CD69 receptors optimized to have an exceptional physical and chemical stability display prolonged circulation and remain intact in the blood of mice.</title>
        <authorList>
            <person name="Vanek O."/>
            <person name="Nalezkova M."/>
            <person name="Kavan D."/>
            <person name="Borovickova I."/>
            <person name="Pompach P."/>
            <person name="Novak P."/>
            <person name="Kumar V."/>
            <person name="Vannucci L."/>
            <person name="Hudecek J."/>
            <person name="Hofbauerova K."/>
            <person name="Kopecky V. Jr."/>
            <person name="Brynda J."/>
            <person name="Kolenko P."/>
            <person name="Dohnalek J."/>
            <person name="Kaderavek P."/>
            <person name="Chmelik J."/>
            <person name="Gorcik L."/>
            <person name="Zidek L."/>
            <person name="Sklenar V."/>
            <person name="Bezouska K."/>
        </authorList>
    </citation>
    <scope>X-RAY CRYSTALLOGRAPHY (1.8 ANGSTROMS) OF 82-199</scope>
    <scope>SUBUNIT</scope>
    <scope>DISULFIDE BONDS</scope>
</reference>
<reference evidence="13" key="14">
    <citation type="journal article" date="2023" name="Elife">
        <title>Transmembrane protein CD69 acts as an S1PR1 agonist.</title>
        <authorList>
            <person name="Chen H."/>
            <person name="Qin Y."/>
            <person name="Chou M."/>
            <person name="Cyster J.G."/>
            <person name="Li X."/>
        </authorList>
    </citation>
    <scope>STRUCTURE BY ELECTRON MICROSCOPY (3.15 ANGSTROMS) OF 3-199</scope>
    <scope>FUNCTION</scope>
    <scope>INTERACTION WITH S1PR1</scope>
    <scope>SUBUNIT</scope>
    <scope>SUBCELLULAR LOCATION</scope>
</reference>
<keyword id="KW-0002">3D-structure</keyword>
<keyword id="KW-1003">Cell membrane</keyword>
<keyword id="KW-0903">Direct protein sequencing</keyword>
<keyword id="KW-1015">Disulfide bond</keyword>
<keyword id="KW-0325">Glycoprotein</keyword>
<keyword id="KW-0430">Lectin</keyword>
<keyword id="KW-0472">Membrane</keyword>
<keyword id="KW-0597">Phosphoprotein</keyword>
<keyword id="KW-1267">Proteomics identification</keyword>
<keyword id="KW-0675">Receptor</keyword>
<keyword id="KW-1185">Reference proteome</keyword>
<keyword id="KW-0735">Signal-anchor</keyword>
<keyword id="KW-0812">Transmembrane</keyword>
<keyword id="KW-1133">Transmembrane helix</keyword>
<feature type="chain" id="PRO_0000046583" description="Early activation antigen CD69">
    <location>
        <begin position="1"/>
        <end position="199"/>
    </location>
</feature>
<feature type="topological domain" description="Cytoplasmic" evidence="2">
    <location>
        <begin position="1"/>
        <end position="40"/>
    </location>
</feature>
<feature type="transmembrane region" description="Helical; Signal-anchor for type II membrane protein" evidence="2">
    <location>
        <begin position="41"/>
        <end position="61"/>
    </location>
</feature>
<feature type="topological domain" description="Extracellular" evidence="2">
    <location>
        <begin position="62"/>
        <end position="199"/>
    </location>
</feature>
<feature type="domain" description="C-type lectin" evidence="3">
    <location>
        <begin position="92"/>
        <end position="195"/>
    </location>
</feature>
<feature type="region of interest" description="Disordered" evidence="4">
    <location>
        <begin position="1"/>
        <end position="29"/>
    </location>
</feature>
<feature type="glycosylation site" description="N-linked (GlcNAc...) asparagine" evidence="9">
    <location>
        <position position="166"/>
    </location>
</feature>
<feature type="disulfide bond" description="Interchain" evidence="6">
    <location>
        <position position="68"/>
    </location>
</feature>
<feature type="disulfide bond" evidence="6">
    <location>
        <begin position="85"/>
        <end position="96"/>
    </location>
</feature>
<feature type="disulfide bond" evidence="6">
    <location>
        <begin position="113"/>
        <end position="194"/>
    </location>
</feature>
<feature type="disulfide bond">
    <location>
        <begin position="173"/>
        <end position="186"/>
    </location>
</feature>
<feature type="helix" evidence="16">
    <location>
        <begin position="41"/>
        <end position="63"/>
    </location>
</feature>
<feature type="strand" evidence="15">
    <location>
        <begin position="90"/>
        <end position="92"/>
    </location>
</feature>
<feature type="strand" evidence="15">
    <location>
        <begin position="95"/>
        <end position="99"/>
    </location>
</feature>
<feature type="helix" evidence="15">
    <location>
        <begin position="106"/>
        <end position="114"/>
    </location>
</feature>
<feature type="turn" evidence="15">
    <location>
        <begin position="115"/>
        <end position="117"/>
    </location>
</feature>
<feature type="helix" evidence="15">
    <location>
        <begin position="126"/>
        <end position="136"/>
    </location>
</feature>
<feature type="strand" evidence="15">
    <location>
        <begin position="141"/>
        <end position="147"/>
    </location>
</feature>
<feature type="strand" evidence="15">
    <location>
        <begin position="153"/>
        <end position="155"/>
    </location>
</feature>
<feature type="strand" evidence="14">
    <location>
        <begin position="168"/>
        <end position="170"/>
    </location>
</feature>
<feature type="strand" evidence="15">
    <location>
        <begin position="172"/>
        <end position="177"/>
    </location>
</feature>
<feature type="strand" evidence="15">
    <location>
        <begin position="180"/>
        <end position="184"/>
    </location>
</feature>
<feature type="strand" evidence="15">
    <location>
        <begin position="190"/>
        <end position="197"/>
    </location>
</feature>
<gene>
    <name type="primary">CD69</name>
    <name type="synonym">CLEC2C</name>
</gene>
<organism>
    <name type="scientific">Homo sapiens</name>
    <name type="common">Human</name>
    <dbReference type="NCBI Taxonomy" id="9606"/>
    <lineage>
        <taxon>Eukaryota</taxon>
        <taxon>Metazoa</taxon>
        <taxon>Chordata</taxon>
        <taxon>Craniata</taxon>
        <taxon>Vertebrata</taxon>
        <taxon>Euteleostomi</taxon>
        <taxon>Mammalia</taxon>
        <taxon>Eutheria</taxon>
        <taxon>Euarchontoglires</taxon>
        <taxon>Primates</taxon>
        <taxon>Haplorrhini</taxon>
        <taxon>Catarrhini</taxon>
        <taxon>Hominidae</taxon>
        <taxon>Homo</taxon>
    </lineage>
</organism>
<sequence>MSSENCFVAENSSLHPESGQENDATSPHFSTRHEGSFQVPVLCAVMNVVFITILIIALIALSVGQYNCPGQYTFSMPSDSHVSSCSEDWVGYQRKCYFISTVKRSWTSAQNACSEHGATLAVIDSEKDMNFLKRYAGREEHWVGLKKEPGHPWKWSNGKEFNNWFNVTGSDKCVFLKNTEVSSMECEKNLYWICNKPYK</sequence>
<proteinExistence type="evidence at protein level"/>
<comment type="function">
    <text evidence="1 8 9 10 11 12">Transmembrane protein expressed mainly on T-cells resident in mucosa that plays an essential role in immune cell homeostasis. Rapidly expressed on the surface of platelets, T-lymphocytes and NK cells upon activation by various stimuli, such as antigen recognition or cytokine signaling, stimulates different signaling pathways in different cell types (PubMed:24752896, PubMed:26296369, PubMed:35930205). Negatively regulates Th17 cell differentiation through its carbohydrate dependent interaction with galectin-1/LGALS1 present on immature dendritic cells (PubMed:24752896). Association of CD69 cytoplasmic tail with the JAK3/STAT5 signaling pathway regulates the transcription of RORgamma/RORC and, consequently, differentiation toward the Th17 lineage (By similarity). Also acts via the S100A8/S100A9 complex present on peripheral blood mononuclear cells to promote the conversion of naive CD4 T-cells into regulatory T-cells (PubMed:26296369). Acts as an oxidized low-density lipoprotein (oxLDL) receptor in CD4 T-lymphocytes and negatively regulates the inflammatory response by inducing the expression of PDCD1 through the activation of NFAT (PubMed:35930205). Participates in adipose tissue-derived mesenchymal stem cells (ASCs)-mediated protection against P.aeruginosa infection. Mechanistically, specifically recognizes P.aeruginosa to promote ERK1 activation, followed by granulocyte-macrophage colony-stimulating factor (GM-CSF) and other inflammatory cytokines secretion (PubMed:34841721). In eosinophils, induces IL-10 production through the ERK1/2 pathway (By similarity). Negatively regulates the chemotactic responses of effector lymphocytes and dendritic cells (DCs) to sphingosine 1 phosphate/S1P by acting as a S1PR1 receptor agonist and facilitating the internalization and degradation of the receptor (PubMed:37039481).</text>
</comment>
<comment type="subunit">
    <text evidence="5 6 7 8 9 12">Homodimer; disulfide-linked (PubMed:37039481). Interacts with S100A8 and S100A9 (PubMed:26296369). Interacts with galactin-1/LGALS1 (PubMed:24752896). Interacts with S1PR1; this interaction mediates S1PR1 degradation (PubMed:37039481).</text>
</comment>
<comment type="interaction">
    <interactant intactId="EBI-2836595">
        <id>Q07108</id>
    </interactant>
    <interactant intactId="EBI-721179">
        <id>P27449</id>
        <label>ATP6V0C</label>
    </interactant>
    <organismsDiffer>false</organismsDiffer>
    <experiments>3</experiments>
</comment>
<comment type="interaction">
    <interactant intactId="EBI-2836595">
        <id>Q07108</id>
    </interactant>
    <interactant intactId="EBI-12244618">
        <id>Q6PL45-2</id>
        <label>BRICD5</label>
    </interactant>
    <organismsDiffer>false</organismsDiffer>
    <experiments>3</experiments>
</comment>
<comment type="interaction">
    <interactant intactId="EBI-2836595">
        <id>Q07108</id>
    </interactant>
    <interactant intactId="EBI-723889">
        <id>O95832</id>
        <label>CLDN1</label>
    </interactant>
    <organismsDiffer>false</organismsDiffer>
    <experiments>3</experiments>
</comment>
<comment type="interaction">
    <interactant intactId="EBI-2836595">
        <id>Q07108</id>
    </interactant>
    <interactant intactId="EBI-3915253">
        <id>Q15125</id>
        <label>EBP</label>
    </interactant>
    <organismsDiffer>false</organismsDiffer>
    <experiments>3</experiments>
</comment>
<comment type="interaction">
    <interactant intactId="EBI-2836595">
        <id>Q07108</id>
    </interactant>
    <interactant intactId="EBI-3932027">
        <id>P21145</id>
        <label>MAL</label>
    </interactant>
    <organismsDiffer>false</organismsDiffer>
    <experiments>3</experiments>
</comment>
<comment type="interaction">
    <interactant intactId="EBI-2836595">
        <id>Q07108</id>
    </interactant>
    <interactant intactId="EBI-10317425">
        <id>Q9NZG7</id>
        <label>NINJ2</label>
    </interactant>
    <organismsDiffer>false</organismsDiffer>
    <experiments>4</experiments>
</comment>
<comment type="interaction">
    <interactant intactId="EBI-2836595">
        <id>Q07108</id>
    </interactant>
    <interactant intactId="EBI-2845982">
        <id>Q01453</id>
        <label>PMP22</label>
    </interactant>
    <organismsDiffer>false</organismsDiffer>
    <experiments>3</experiments>
</comment>
<comment type="interaction">
    <interactant intactId="EBI-2836595">
        <id>Q07108</id>
    </interactant>
    <interactant intactId="EBI-1052363">
        <id>Q9NS64</id>
        <label>RPRM</label>
    </interactant>
    <organismsDiffer>false</organismsDiffer>
    <experiments>3</experiments>
</comment>
<comment type="interaction">
    <interactant intactId="EBI-2836595">
        <id>Q07108</id>
    </interactant>
    <interactant intactId="EBI-2681920">
        <id>P21453</id>
        <label>S1PR1</label>
    </interactant>
    <organismsDiffer>false</organismsDiffer>
    <experiments>2</experiments>
</comment>
<comment type="interaction">
    <interactant intactId="EBI-2836595">
        <id>Q07108</id>
    </interactant>
    <interactant intactId="EBI-1054782">
        <id>Q8TB61</id>
        <label>SLC35B2</label>
    </interactant>
    <organismsDiffer>false</organismsDiffer>
    <experiments>3</experiments>
</comment>
<comment type="interaction">
    <interactant intactId="EBI-2836595">
        <id>Q07108</id>
    </interactant>
    <interactant intactId="EBI-12200293">
        <id>P0DN84</id>
        <label>STRIT1</label>
    </interactant>
    <organismsDiffer>false</organismsDiffer>
    <experiments>3</experiments>
</comment>
<comment type="interaction">
    <interactant intactId="EBI-2836595">
        <id>Q07108</id>
    </interactant>
    <interactant intactId="EBI-10278423">
        <id>Q8WZ59</id>
        <label>TMEM190</label>
    </interactant>
    <organismsDiffer>false</organismsDiffer>
    <experiments>6</experiments>
</comment>
<comment type="interaction">
    <interactant intactId="EBI-2836595">
        <id>Q07108</id>
    </interactant>
    <interactant intactId="EBI-12195249">
        <id>Q5TGU0</id>
        <label>TSPO2</label>
    </interactant>
    <organismsDiffer>false</organismsDiffer>
    <experiments>3</experiments>
</comment>
<comment type="interaction">
    <interactant intactId="EBI-2836595">
        <id>Q07108</id>
    </interactant>
    <interactant intactId="EBI-12237619">
        <id>O75841</id>
        <label>UPK1B</label>
    </interactant>
    <organismsDiffer>false</organismsDiffer>
    <experiments>3</experiments>
</comment>
<comment type="subcellular location">
    <subcellularLocation>
        <location evidence="12">Cell membrane</location>
        <topology>Single-pass type II membrane protein</topology>
    </subcellularLocation>
</comment>
<comment type="tissue specificity">
    <text>Expressed on the surface of activated T-cells, B-cells, natural killer cells, neutrophils, eosinophils, epidermal Langerhans cells and platelets.</text>
</comment>
<comment type="developmental stage">
    <text>Earliest inducible cell surface glycoprotein acquired during lymphoid activation.</text>
</comment>
<comment type="induction">
    <text>By antigens, mitogens or activators of PKC on the surface of T and B-lymphocytes. By interaction of IL-2 with the p75 IL-2R on the surface of NK cells.</text>
</comment>
<comment type="PTM">
    <text>Constitutive Ser/Thr phosphorylation in both mature thymocytes and activated T-lymphocytes.</text>
</comment>
<comment type="online information" name="Functional Glycomics Gateway - Glycan Binding">
    <link uri="http://www.functionalglycomics.org/glycomics/GBPServlet?&amp;operationType=view&amp;cbpId=cbp_hum_Ctlect_235"/>
    <text>CD69</text>
</comment>
<evidence type="ECO:0000250" key="1">
    <source>
        <dbReference type="UniProtKB" id="P37217"/>
    </source>
</evidence>
<evidence type="ECO:0000255" key="2"/>
<evidence type="ECO:0000255" key="3">
    <source>
        <dbReference type="PROSITE-ProRule" id="PRU00040"/>
    </source>
</evidence>
<evidence type="ECO:0000256" key="4">
    <source>
        <dbReference type="SAM" id="MobiDB-lite"/>
    </source>
</evidence>
<evidence type="ECO:0000269" key="5">
    <source>
    </source>
</evidence>
<evidence type="ECO:0000269" key="6">
    <source>
    </source>
</evidence>
<evidence type="ECO:0000269" key="7">
    <source>
    </source>
</evidence>
<evidence type="ECO:0000269" key="8">
    <source>
    </source>
</evidence>
<evidence type="ECO:0000269" key="9">
    <source>
    </source>
</evidence>
<evidence type="ECO:0000269" key="10">
    <source>
    </source>
</evidence>
<evidence type="ECO:0000269" key="11">
    <source>
    </source>
</evidence>
<evidence type="ECO:0000269" key="12">
    <source>
    </source>
</evidence>
<evidence type="ECO:0007744" key="13">
    <source>
        <dbReference type="PDB" id="8G94"/>
    </source>
</evidence>
<evidence type="ECO:0007829" key="14">
    <source>
        <dbReference type="PDB" id="1E87"/>
    </source>
</evidence>
<evidence type="ECO:0007829" key="15">
    <source>
        <dbReference type="PDB" id="3HUP"/>
    </source>
</evidence>
<evidence type="ECO:0007829" key="16">
    <source>
        <dbReference type="PDB" id="8G94"/>
    </source>
</evidence>
<accession>Q07108</accession>